<dbReference type="EMBL" id="CR926109">
    <property type="protein sequence ID" value="CAI29734.1"/>
    <property type="molecule type" value="mRNA"/>
</dbReference>
<dbReference type="EMBL" id="CR861007">
    <property type="protein sequence ID" value="CAH93104.1"/>
    <property type="molecule type" value="mRNA"/>
</dbReference>
<dbReference type="EMBL" id="CR926056">
    <property type="protein sequence ID" value="CAI29686.1"/>
    <property type="molecule type" value="mRNA"/>
</dbReference>
<dbReference type="RefSeq" id="NP_001127693.1">
    <property type="nucleotide sequence ID" value="NM_001134221.1"/>
</dbReference>
<dbReference type="SMR" id="Q5R562"/>
<dbReference type="FunCoup" id="Q5R562">
    <property type="interactions" value="152"/>
</dbReference>
<dbReference type="STRING" id="9601.ENSPPYP00000008685"/>
<dbReference type="Ensembl" id="ENSPPYT00000034775.1">
    <property type="protein sequence ID" value="ENSPPYP00000032833.1"/>
    <property type="gene ID" value="ENSPPYG00000038916.1"/>
</dbReference>
<dbReference type="GeneID" id="100174775"/>
<dbReference type="KEGG" id="pon:100174775"/>
<dbReference type="CTD" id="89927"/>
<dbReference type="eggNOG" id="ENOG502RC9C">
    <property type="taxonomic scope" value="Eukaryota"/>
</dbReference>
<dbReference type="GeneTree" id="ENSGT00440000038745"/>
<dbReference type="InParanoid" id="Q5R562"/>
<dbReference type="OMA" id="ATQCSIM"/>
<dbReference type="OrthoDB" id="10048027at2759"/>
<dbReference type="Proteomes" id="UP000001595">
    <property type="component" value="Unplaced"/>
</dbReference>
<dbReference type="GO" id="GO:0015630">
    <property type="term" value="C:microtubule cytoskeleton"/>
    <property type="evidence" value="ECO:0007669"/>
    <property type="project" value="TreeGrafter"/>
</dbReference>
<dbReference type="GO" id="GO:0007026">
    <property type="term" value="P:negative regulation of microtubule depolymerization"/>
    <property type="evidence" value="ECO:0007669"/>
    <property type="project" value="TreeGrafter"/>
</dbReference>
<dbReference type="InterPro" id="IPR022735">
    <property type="entry name" value="bMERB_dom"/>
</dbReference>
<dbReference type="InterPro" id="IPR040127">
    <property type="entry name" value="C16orf45-like"/>
</dbReference>
<dbReference type="PANTHER" id="PTHR22704:SF1">
    <property type="entry name" value="BMERB DOMAIN-CONTAINING PROTEIN 1"/>
    <property type="match status" value="1"/>
</dbReference>
<dbReference type="PANTHER" id="PTHR22704">
    <property type="entry name" value="BMERB DOMAIN-CONTAINING PROTEIN 1-RELATED"/>
    <property type="match status" value="1"/>
</dbReference>
<dbReference type="Pfam" id="PF12130">
    <property type="entry name" value="bMERB_dom"/>
    <property type="match status" value="1"/>
</dbReference>
<dbReference type="SMART" id="SM01203">
    <property type="entry name" value="DUF3585"/>
    <property type="match status" value="1"/>
</dbReference>
<dbReference type="PROSITE" id="PS51848">
    <property type="entry name" value="BMERB"/>
    <property type="match status" value="1"/>
</dbReference>
<name>MERB1_PONAB</name>
<accession>Q5R562</accession>
<accession>Q5NVC9</accession>
<accession>Q5NVH7</accession>
<sequence length="204" mass="23632">MELKQSLSTHLEAEKPLRRYGAVEETAWKTEGLGRNQLDIISMAETTMMPEEIELEMAKIQRLREVLVRRESELRFMMDDIQLCKDIMDLKQELQNLVAIPEKEKTKLQKQREDELIQKIHKLVQKRDFLVDDAEVERLREQEEDKEMADFLRIKLKPLDKVTKSPASSRAEKKAEPPPSKPTVAKTGLALIKDCCGATQCNIM</sequence>
<gene>
    <name type="primary">BMERB1</name>
</gene>
<protein>
    <recommendedName>
        <fullName evidence="3">bMERB domain-containing protein 1</fullName>
    </recommendedName>
    <alternativeName>
        <fullName>Uncharacterized protein C16orf45 homolog</fullName>
    </alternativeName>
</protein>
<keyword id="KW-1185">Reference proteome</keyword>
<proteinExistence type="evidence at transcript level"/>
<reference key="1">
    <citation type="submission" date="2004-11" db="EMBL/GenBank/DDBJ databases">
        <authorList>
            <consortium name="The German cDNA consortium"/>
        </authorList>
    </citation>
    <scope>NUCLEOTIDE SEQUENCE [LARGE SCALE MRNA]</scope>
    <source>
        <tissue>Brain cortex</tissue>
    </source>
</reference>
<organism>
    <name type="scientific">Pongo abelii</name>
    <name type="common">Sumatran orangutan</name>
    <name type="synonym">Pongo pygmaeus abelii</name>
    <dbReference type="NCBI Taxonomy" id="9601"/>
    <lineage>
        <taxon>Eukaryota</taxon>
        <taxon>Metazoa</taxon>
        <taxon>Chordata</taxon>
        <taxon>Craniata</taxon>
        <taxon>Vertebrata</taxon>
        <taxon>Euteleostomi</taxon>
        <taxon>Mammalia</taxon>
        <taxon>Eutheria</taxon>
        <taxon>Euarchontoglires</taxon>
        <taxon>Primates</taxon>
        <taxon>Haplorrhini</taxon>
        <taxon>Catarrhini</taxon>
        <taxon>Hominidae</taxon>
        <taxon>Pongo</taxon>
    </lineage>
</organism>
<feature type="chain" id="PRO_0000079283" description="bMERB domain-containing protein 1">
    <location>
        <begin position="1"/>
        <end position="204"/>
    </location>
</feature>
<feature type="domain" description="bMERB" evidence="1">
    <location>
        <begin position="3"/>
        <end position="150"/>
    </location>
</feature>
<feature type="region of interest" description="Disordered" evidence="2">
    <location>
        <begin position="162"/>
        <end position="187"/>
    </location>
</feature>
<feature type="sequence conflict" description="In Ref. 1; CAH93104." evidence="3" ref="1">
    <original>E</original>
    <variation>G</variation>
    <location>
        <position position="25"/>
    </location>
</feature>
<feature type="sequence conflict" description="In Ref. 1; CAI29686." evidence="3" ref="1">
    <original>N</original>
    <variation>S</variation>
    <location>
        <position position="36"/>
    </location>
</feature>
<feature type="sequence conflict" description="In Ref. 1; CAI29734." evidence="3" ref="1">
    <original>F</original>
    <variation>L</variation>
    <location>
        <position position="76"/>
    </location>
</feature>
<feature type="sequence conflict" description="In Ref. 1; CAI29734." evidence="3" ref="1">
    <original>K</original>
    <variation>R</variation>
    <location>
        <position position="85"/>
    </location>
</feature>
<evidence type="ECO:0000255" key="1">
    <source>
        <dbReference type="PROSITE-ProRule" id="PRU01195"/>
    </source>
</evidence>
<evidence type="ECO:0000256" key="2">
    <source>
        <dbReference type="SAM" id="MobiDB-lite"/>
    </source>
</evidence>
<evidence type="ECO:0000305" key="3"/>